<dbReference type="PIR" id="A02902">
    <property type="entry name" value="CYHXAA"/>
</dbReference>
<dbReference type="SMR" id="P02499"/>
<dbReference type="GlyCosmos" id="P02499">
    <property type="glycosylation" value="1 site, No reported glycans"/>
</dbReference>
<dbReference type="iPTMnet" id="P02499"/>
<dbReference type="Ensembl" id="ENSPCAT00000010826">
    <property type="protein sequence ID" value="ENSPCAP00000010099"/>
    <property type="gene ID" value="ENSPCAG00000010881"/>
</dbReference>
<dbReference type="HOGENOM" id="CLU_095001_2_0_1"/>
<dbReference type="OMA" id="QQDDHGY"/>
<dbReference type="TreeFam" id="TF105049"/>
<dbReference type="GO" id="GO:0005737">
    <property type="term" value="C:cytoplasm"/>
    <property type="evidence" value="ECO:0000250"/>
    <property type="project" value="UniProtKB"/>
</dbReference>
<dbReference type="GO" id="GO:0005829">
    <property type="term" value="C:cytosol"/>
    <property type="evidence" value="ECO:0007669"/>
    <property type="project" value="Ensembl"/>
</dbReference>
<dbReference type="GO" id="GO:0005654">
    <property type="term" value="C:nucleoplasm"/>
    <property type="evidence" value="ECO:0007669"/>
    <property type="project" value="Ensembl"/>
</dbReference>
<dbReference type="GO" id="GO:0005634">
    <property type="term" value="C:nucleus"/>
    <property type="evidence" value="ECO:0000250"/>
    <property type="project" value="UniProtKB"/>
</dbReference>
<dbReference type="GO" id="GO:0032991">
    <property type="term" value="C:protein-containing complex"/>
    <property type="evidence" value="ECO:0007669"/>
    <property type="project" value="Ensembl"/>
</dbReference>
<dbReference type="GO" id="GO:0042802">
    <property type="term" value="F:identical protein binding"/>
    <property type="evidence" value="ECO:0007669"/>
    <property type="project" value="Ensembl"/>
</dbReference>
<dbReference type="GO" id="GO:0046872">
    <property type="term" value="F:metal ion binding"/>
    <property type="evidence" value="ECO:0007669"/>
    <property type="project" value="UniProtKB-KW"/>
</dbReference>
<dbReference type="GO" id="GO:0005212">
    <property type="term" value="F:structural constituent of eye lens"/>
    <property type="evidence" value="ECO:0007669"/>
    <property type="project" value="UniProtKB-KW"/>
</dbReference>
<dbReference type="GO" id="GO:0051082">
    <property type="term" value="F:unfolded protein binding"/>
    <property type="evidence" value="ECO:0007669"/>
    <property type="project" value="Ensembl"/>
</dbReference>
<dbReference type="GO" id="GO:0002088">
    <property type="term" value="P:lens development in camera-type eye"/>
    <property type="evidence" value="ECO:0007669"/>
    <property type="project" value="TreeGrafter"/>
</dbReference>
<dbReference type="GO" id="GO:0043066">
    <property type="term" value="P:negative regulation of apoptotic process"/>
    <property type="evidence" value="ECO:0007669"/>
    <property type="project" value="Ensembl"/>
</dbReference>
<dbReference type="GO" id="GO:0032387">
    <property type="term" value="P:negative regulation of intracellular transport"/>
    <property type="evidence" value="ECO:0007669"/>
    <property type="project" value="Ensembl"/>
</dbReference>
<dbReference type="GO" id="GO:0042026">
    <property type="term" value="P:protein refolding"/>
    <property type="evidence" value="ECO:0007669"/>
    <property type="project" value="TreeGrafter"/>
</dbReference>
<dbReference type="GO" id="GO:0050821">
    <property type="term" value="P:protein stabilization"/>
    <property type="evidence" value="ECO:0007669"/>
    <property type="project" value="Ensembl"/>
</dbReference>
<dbReference type="GO" id="GO:0009408">
    <property type="term" value="P:response to heat"/>
    <property type="evidence" value="ECO:0007669"/>
    <property type="project" value="TreeGrafter"/>
</dbReference>
<dbReference type="GO" id="GO:0007601">
    <property type="term" value="P:visual perception"/>
    <property type="evidence" value="ECO:0007669"/>
    <property type="project" value="Ensembl"/>
</dbReference>
<dbReference type="CDD" id="cd06497">
    <property type="entry name" value="ACD_alphaA-crystallin_HspB4"/>
    <property type="match status" value="1"/>
</dbReference>
<dbReference type="FunFam" id="2.60.40.790:FF:000008">
    <property type="entry name" value="Alpha-crystallin A chain"/>
    <property type="match status" value="1"/>
</dbReference>
<dbReference type="Gene3D" id="2.60.40.790">
    <property type="match status" value="1"/>
</dbReference>
<dbReference type="InterPro" id="IPR002068">
    <property type="entry name" value="A-crystallin/Hsp20_dom"/>
</dbReference>
<dbReference type="InterPro" id="IPR055269">
    <property type="entry name" value="Alpha-crystallin/HSP_16"/>
</dbReference>
<dbReference type="InterPro" id="IPR001436">
    <property type="entry name" value="Alpha-crystallin/sHSP_animal"/>
</dbReference>
<dbReference type="InterPro" id="IPR003090">
    <property type="entry name" value="Alpha-crystallin_N"/>
</dbReference>
<dbReference type="InterPro" id="IPR008978">
    <property type="entry name" value="HSP20-like_chaperone"/>
</dbReference>
<dbReference type="PANTHER" id="PTHR45640:SF14">
    <property type="entry name" value="ALPHA-CRYSTALLIN A CHAIN"/>
    <property type="match status" value="1"/>
</dbReference>
<dbReference type="PANTHER" id="PTHR45640">
    <property type="entry name" value="HEAT SHOCK PROTEIN HSP-12.2-RELATED"/>
    <property type="match status" value="1"/>
</dbReference>
<dbReference type="Pfam" id="PF00525">
    <property type="entry name" value="Crystallin"/>
    <property type="match status" value="1"/>
</dbReference>
<dbReference type="Pfam" id="PF00011">
    <property type="entry name" value="HSP20"/>
    <property type="match status" value="1"/>
</dbReference>
<dbReference type="PIRSF" id="PIRSF036514">
    <property type="entry name" value="Sm_HSP_B1"/>
    <property type="match status" value="1"/>
</dbReference>
<dbReference type="PRINTS" id="PR00299">
    <property type="entry name" value="ACRYSTALLIN"/>
</dbReference>
<dbReference type="SUPFAM" id="SSF49764">
    <property type="entry name" value="HSP20-like chaperones"/>
    <property type="match status" value="1"/>
</dbReference>
<dbReference type="PROSITE" id="PS01031">
    <property type="entry name" value="SHSP"/>
    <property type="match status" value="1"/>
</dbReference>
<protein>
    <recommendedName>
        <fullName>Alpha-crystallin A chain</fullName>
    </recommendedName>
</protein>
<comment type="function">
    <text evidence="3">Contributes to the transparency and refractive index of the lens. In its oxidized form (absence of intramolecular disulfide bond), acts as a chaperone, preventing aggregation of various proteins under a wide range of stress conditions. Required for the correct formation of lens intermediate filaments as part of a complex composed of BFSP1, BFSP2 and CRYAA.</text>
</comment>
<comment type="subunit">
    <text evidence="2 3">Heteromer composed of three CRYAA and one CRYAB subunits. Inter-subunit bridging via zinc ions enhances stability, which is crucial as there is no protein turn over in the lens. Can also form homodimers and homotetramers (dimers of dimers) which serve as the building blocks of homooligomers (By similarity). Within homooligomers, the zinc-binding motif is created from residues of 3 different molecules. His-100 and Glu-102 from one molecule are ligands of the zinc ion, and His-107 and His-154 residues from additional molecules complete the site with tetrahedral coordination geometry (By similarity). Part of a complex required for lens intermediate filament formation composed of BFSP1, BFSP2 and CRYAA (By similarity).</text>
</comment>
<comment type="subcellular location">
    <subcellularLocation>
        <location evidence="3">Cytoplasm</location>
    </subcellularLocation>
    <subcellularLocation>
        <location evidence="3">Nucleus</location>
    </subcellularLocation>
    <text evidence="3">Translocates to the nucleus during heat shock and resides in sub-nuclear structures known as SC35 speckles or nuclear splicing speckles.</text>
</comment>
<comment type="PTM">
    <text evidence="3">Undergoes age-dependent proteolytical cleavage at the C-terminus.</text>
</comment>
<comment type="similarity">
    <text evidence="4">Belongs to the small heat shock protein (HSP20) family.</text>
</comment>
<sequence length="173" mass="19822">MDVTIQHPWFKRALGPFYPSRLFDQFFGEGLFEYDLLPFLSSTISPYYRQSLFRTVLDSGISEVRSDRDQFLILLDVKHFSPEDLTVKVLDDFVEIHGKHNERQDDHGYISREFHRRYRLPSNVDQSALSCSLSADGMLTFCGPKVQSGMDASHSERAIPVSREEKPSSAPSS</sequence>
<keyword id="KW-0007">Acetylation</keyword>
<keyword id="KW-0143">Chaperone</keyword>
<keyword id="KW-0963">Cytoplasm</keyword>
<keyword id="KW-0903">Direct protein sequencing</keyword>
<keyword id="KW-1015">Disulfide bond</keyword>
<keyword id="KW-0273">Eye lens protein</keyword>
<keyword id="KW-0325">Glycoprotein</keyword>
<keyword id="KW-0479">Metal-binding</keyword>
<keyword id="KW-0488">Methylation</keyword>
<keyword id="KW-0539">Nucleus</keyword>
<keyword id="KW-0597">Phosphoprotein</keyword>
<keyword id="KW-0862">Zinc</keyword>
<proteinExistence type="evidence at protein level"/>
<accession>P02499</accession>
<evidence type="ECO:0000250" key="1"/>
<evidence type="ECO:0000250" key="2">
    <source>
        <dbReference type="UniProtKB" id="P02470"/>
    </source>
</evidence>
<evidence type="ECO:0000250" key="3">
    <source>
        <dbReference type="UniProtKB" id="P02489"/>
    </source>
</evidence>
<evidence type="ECO:0000255" key="4">
    <source>
        <dbReference type="PROSITE-ProRule" id="PRU00285"/>
    </source>
</evidence>
<evidence type="ECO:0000256" key="5">
    <source>
        <dbReference type="SAM" id="MobiDB-lite"/>
    </source>
</evidence>
<evidence type="ECO:0000269" key="6">
    <source>
    </source>
</evidence>
<gene>
    <name type="primary">CRYAA</name>
</gene>
<feature type="chain" id="PRO_0000125880" description="Alpha-crystallin A chain">
    <location>
        <begin position="1"/>
        <end position="173"/>
    </location>
</feature>
<feature type="domain" description="sHSP" evidence="4">
    <location>
        <begin position="52"/>
        <end position="162"/>
    </location>
</feature>
<feature type="region of interest" description="Required for complex formation with BFSP1 and BFSP2" evidence="3">
    <location>
        <begin position="1"/>
        <end position="63"/>
    </location>
</feature>
<feature type="region of interest" description="Disordered" evidence="5">
    <location>
        <begin position="147"/>
        <end position="173"/>
    </location>
</feature>
<feature type="compositionally biased region" description="Basic and acidic residues" evidence="5">
    <location>
        <begin position="153"/>
        <end position="167"/>
    </location>
</feature>
<feature type="binding site" evidence="2">
    <location>
        <position position="100"/>
    </location>
    <ligand>
        <name>Zn(2+)</name>
        <dbReference type="ChEBI" id="CHEBI:29105"/>
        <label>1</label>
    </ligand>
</feature>
<feature type="binding site" evidence="2">
    <location>
        <position position="102"/>
    </location>
    <ligand>
        <name>Zn(2+)</name>
        <dbReference type="ChEBI" id="CHEBI:29105"/>
        <label>1</label>
    </ligand>
</feature>
<feature type="binding site" evidence="2">
    <location>
        <position position="107"/>
    </location>
    <ligand>
        <name>Zn(2+)</name>
        <dbReference type="ChEBI" id="CHEBI:29105"/>
        <label>2</label>
    </ligand>
</feature>
<feature type="binding site" evidence="2">
    <location>
        <position position="154"/>
    </location>
    <ligand>
        <name>Zn(2+)</name>
        <dbReference type="ChEBI" id="CHEBI:29105"/>
        <label>3</label>
    </ligand>
</feature>
<feature type="modified residue" description="N-acetylmethionine" evidence="6">
    <location>
        <position position="1"/>
    </location>
</feature>
<feature type="modified residue" description="Deamidated glutamine; partial" evidence="1">
    <location>
        <position position="6"/>
    </location>
</feature>
<feature type="modified residue" description="Phosphoserine" evidence="3">
    <location>
        <position position="45"/>
    </location>
</feature>
<feature type="modified residue" description="Deamidated glutamine; partial" evidence="1">
    <location>
        <position position="50"/>
    </location>
</feature>
<feature type="modified residue" description="N6-acetyllysine" evidence="3">
    <location>
        <position position="99"/>
    </location>
</feature>
<feature type="modified residue" description="Deamidated asparagine; partial" evidence="1">
    <location>
        <position position="101"/>
    </location>
</feature>
<feature type="modified residue" description="Phosphoserine" evidence="2">
    <location>
        <position position="122"/>
    </location>
</feature>
<feature type="modified residue" description="Deamidated asparagine; partial" evidence="1">
    <location>
        <position position="123"/>
    </location>
</feature>
<feature type="modified residue" description="Deamidated glutamine; partial" evidence="1">
    <location>
        <position position="147"/>
    </location>
</feature>
<feature type="glycosylation site" description="O-linked (GlcNAc) serine" evidence="1">
    <location>
        <position position="162"/>
    </location>
</feature>
<feature type="disulfide bond" evidence="3">
    <location>
        <begin position="131"/>
        <end position="142"/>
    </location>
</feature>
<feature type="sequence variant" description="In 50% of the molecules.">
    <original>T</original>
    <variation>A</variation>
    <location>
        <position position="55"/>
    </location>
</feature>
<name>CRYAA_PROCA</name>
<reference key="1">
    <citation type="journal article" date="1977" name="Biochim. Biophys. Acta">
        <title>Primary structures of alpha-crystallin A chains of elephant, whale, hyrax and rhinoceros.</title>
        <authorList>
            <person name="de Jong W.W."/>
            <person name="Nuy-Terwindt E.C."/>
            <person name="Versteeg M."/>
        </authorList>
    </citation>
    <scope>PROTEIN SEQUENCE</scope>
    <scope>ACETYLATION AT MET-1</scope>
</reference>
<organism>
    <name type="scientific">Procavia capensis</name>
    <name type="common">Rock hyrax</name>
    <dbReference type="NCBI Taxonomy" id="9813"/>
    <lineage>
        <taxon>Eukaryota</taxon>
        <taxon>Metazoa</taxon>
        <taxon>Chordata</taxon>
        <taxon>Craniata</taxon>
        <taxon>Vertebrata</taxon>
        <taxon>Euteleostomi</taxon>
        <taxon>Mammalia</taxon>
        <taxon>Eutheria</taxon>
        <taxon>Afrotheria</taxon>
        <taxon>Hyracoidea</taxon>
        <taxon>Procaviidae</taxon>
        <taxon>Procavia</taxon>
    </lineage>
</organism>